<reference key="1">
    <citation type="journal article" date="2003" name="Genome Res.">
        <title>Comparative genome analysis of Vibrio vulnificus, a marine pathogen.</title>
        <authorList>
            <person name="Chen C.-Y."/>
            <person name="Wu K.-M."/>
            <person name="Chang Y.-C."/>
            <person name="Chang C.-H."/>
            <person name="Tsai H.-C."/>
            <person name="Liao T.-L."/>
            <person name="Liu Y.-M."/>
            <person name="Chen H.-J."/>
            <person name="Shen A.B.-T."/>
            <person name="Li J.-C."/>
            <person name="Su T.-L."/>
            <person name="Shao C.-P."/>
            <person name="Lee C.-T."/>
            <person name="Hor L.-I."/>
            <person name="Tsai S.-F."/>
        </authorList>
    </citation>
    <scope>NUCLEOTIDE SEQUENCE [LARGE SCALE GENOMIC DNA]</scope>
    <source>
        <strain>YJ016</strain>
    </source>
</reference>
<proteinExistence type="inferred from homology"/>
<keyword id="KW-0030">Aminoacyl-tRNA synthetase</keyword>
<keyword id="KW-0067">ATP-binding</keyword>
<keyword id="KW-0963">Cytoplasm</keyword>
<keyword id="KW-0436">Ligase</keyword>
<keyword id="KW-0547">Nucleotide-binding</keyword>
<keyword id="KW-0648">Protein biosynthesis</keyword>
<name>SYGB_VIBVY</name>
<sequence length="693" mass="76754">MAKEFLIELGTEELPPTQLRTLAEAFAANFEAELKGAELTHEGVKWYAAPRRLALKVTALAEHQADKIVEKRGPAVSAAFDAEGNATKAAQGWARGCGITVDQAERMITDKGEWLLFKQEVKGQPTADIVVELAAKALAGLPIAKPMRWGNKTTQFIRPVKTLTMLMGSDLIQGEILGVASDRVIRGHRFMGEREFTIESAEQYPAILEERGKVMADYEMRKAIILADAQKAAAAIGGIADLEDDLVEEVTSLVEWPVVLTAKFEEEFLKVPAEALVYTMKGDQKYFPVYTEDKQLLPNFIFVSNIESKEPRYVIEGNEKVVRPRLADAEFFFNTDRKSKLIDRLPMLENAIFQQQLGTIKDKTDRITELAGYIAEQIGADVEKSKRAGLLAKCDLMTSMVFEFTDTQGVMGMHYARHDGEAEEVALALNEQYMPRFAGDDLPSNGVSAAVAMADKLDTIVGIFGIGQAPKGSDPFALRRASLGVLRIIVEYGYNLDLVDLVAKAKSLFAQQDGTSRLTNDNVEQEVIEFMLGRFRAWYQDEGFSVDIIQAVLARRPTKPADFDQRVKAVSHFRELEAAEALAAANKRVGNILAKFDGELAAEIDLALLQEDAEKVLAENVEVMTEALEPAFATGNYQEALSKLADLREPVDAFFDNVMVMADDEALKTNRLTLLNNLRNLFLQIADISLLQK</sequence>
<gene>
    <name evidence="1" type="primary">glyS</name>
    <name type="ordered locus">VV0020</name>
</gene>
<accession>Q7MQI8</accession>
<dbReference type="EC" id="6.1.1.14" evidence="1"/>
<dbReference type="EMBL" id="BA000037">
    <property type="protein sequence ID" value="BAC92784.1"/>
    <property type="molecule type" value="Genomic_DNA"/>
</dbReference>
<dbReference type="RefSeq" id="WP_011149060.1">
    <property type="nucleotide sequence ID" value="NC_005139.1"/>
</dbReference>
<dbReference type="SMR" id="Q7MQI8"/>
<dbReference type="STRING" id="672.VV93_v1c00090"/>
<dbReference type="KEGG" id="vvy:VV0020"/>
<dbReference type="PATRIC" id="fig|196600.6.peg.73"/>
<dbReference type="eggNOG" id="COG0751">
    <property type="taxonomic scope" value="Bacteria"/>
</dbReference>
<dbReference type="HOGENOM" id="CLU_007220_2_2_6"/>
<dbReference type="Proteomes" id="UP000002675">
    <property type="component" value="Chromosome I"/>
</dbReference>
<dbReference type="GO" id="GO:0005829">
    <property type="term" value="C:cytosol"/>
    <property type="evidence" value="ECO:0007669"/>
    <property type="project" value="TreeGrafter"/>
</dbReference>
<dbReference type="GO" id="GO:0004814">
    <property type="term" value="F:arginine-tRNA ligase activity"/>
    <property type="evidence" value="ECO:0007669"/>
    <property type="project" value="InterPro"/>
</dbReference>
<dbReference type="GO" id="GO:0005524">
    <property type="term" value="F:ATP binding"/>
    <property type="evidence" value="ECO:0007669"/>
    <property type="project" value="UniProtKB-UniRule"/>
</dbReference>
<dbReference type="GO" id="GO:0004820">
    <property type="term" value="F:glycine-tRNA ligase activity"/>
    <property type="evidence" value="ECO:0007669"/>
    <property type="project" value="UniProtKB-UniRule"/>
</dbReference>
<dbReference type="GO" id="GO:0006420">
    <property type="term" value="P:arginyl-tRNA aminoacylation"/>
    <property type="evidence" value="ECO:0007669"/>
    <property type="project" value="InterPro"/>
</dbReference>
<dbReference type="GO" id="GO:0006426">
    <property type="term" value="P:glycyl-tRNA aminoacylation"/>
    <property type="evidence" value="ECO:0007669"/>
    <property type="project" value="UniProtKB-UniRule"/>
</dbReference>
<dbReference type="HAMAP" id="MF_00255">
    <property type="entry name" value="Gly_tRNA_synth_beta"/>
    <property type="match status" value="1"/>
</dbReference>
<dbReference type="InterPro" id="IPR008909">
    <property type="entry name" value="DALR_anticod-bd"/>
</dbReference>
<dbReference type="InterPro" id="IPR015944">
    <property type="entry name" value="Gly-tRNA-synth_bsu"/>
</dbReference>
<dbReference type="InterPro" id="IPR006194">
    <property type="entry name" value="Gly-tRNA-synth_heterodimer"/>
</dbReference>
<dbReference type="NCBIfam" id="TIGR00211">
    <property type="entry name" value="glyS"/>
    <property type="match status" value="1"/>
</dbReference>
<dbReference type="PANTHER" id="PTHR30075:SF2">
    <property type="entry name" value="GLYCINE--TRNA LIGASE, CHLOROPLASTIC_MITOCHONDRIAL 2"/>
    <property type="match status" value="1"/>
</dbReference>
<dbReference type="PANTHER" id="PTHR30075">
    <property type="entry name" value="GLYCYL-TRNA SYNTHETASE"/>
    <property type="match status" value="1"/>
</dbReference>
<dbReference type="Pfam" id="PF05746">
    <property type="entry name" value="DALR_1"/>
    <property type="match status" value="1"/>
</dbReference>
<dbReference type="Pfam" id="PF02092">
    <property type="entry name" value="tRNA_synt_2f"/>
    <property type="match status" value="1"/>
</dbReference>
<dbReference type="PRINTS" id="PR01045">
    <property type="entry name" value="TRNASYNTHGB"/>
</dbReference>
<dbReference type="SUPFAM" id="SSF109604">
    <property type="entry name" value="HD-domain/PDEase-like"/>
    <property type="match status" value="1"/>
</dbReference>
<dbReference type="PROSITE" id="PS50861">
    <property type="entry name" value="AA_TRNA_LIGASE_II_GLYAB"/>
    <property type="match status" value="1"/>
</dbReference>
<comment type="catalytic activity">
    <reaction evidence="1">
        <text>tRNA(Gly) + glycine + ATP = glycyl-tRNA(Gly) + AMP + diphosphate</text>
        <dbReference type="Rhea" id="RHEA:16013"/>
        <dbReference type="Rhea" id="RHEA-COMP:9664"/>
        <dbReference type="Rhea" id="RHEA-COMP:9683"/>
        <dbReference type="ChEBI" id="CHEBI:30616"/>
        <dbReference type="ChEBI" id="CHEBI:33019"/>
        <dbReference type="ChEBI" id="CHEBI:57305"/>
        <dbReference type="ChEBI" id="CHEBI:78442"/>
        <dbReference type="ChEBI" id="CHEBI:78522"/>
        <dbReference type="ChEBI" id="CHEBI:456215"/>
        <dbReference type="EC" id="6.1.1.14"/>
    </reaction>
</comment>
<comment type="subunit">
    <text evidence="1">Tetramer of two alpha and two beta subunits.</text>
</comment>
<comment type="subcellular location">
    <subcellularLocation>
        <location evidence="1">Cytoplasm</location>
    </subcellularLocation>
</comment>
<comment type="similarity">
    <text evidence="1">Belongs to the class-II aminoacyl-tRNA synthetase family.</text>
</comment>
<evidence type="ECO:0000255" key="1">
    <source>
        <dbReference type="HAMAP-Rule" id="MF_00255"/>
    </source>
</evidence>
<feature type="chain" id="PRO_0000072938" description="Glycine--tRNA ligase beta subunit">
    <location>
        <begin position="1"/>
        <end position="693"/>
    </location>
</feature>
<organism>
    <name type="scientific">Vibrio vulnificus (strain YJ016)</name>
    <dbReference type="NCBI Taxonomy" id="196600"/>
    <lineage>
        <taxon>Bacteria</taxon>
        <taxon>Pseudomonadati</taxon>
        <taxon>Pseudomonadota</taxon>
        <taxon>Gammaproteobacteria</taxon>
        <taxon>Vibrionales</taxon>
        <taxon>Vibrionaceae</taxon>
        <taxon>Vibrio</taxon>
    </lineage>
</organism>
<protein>
    <recommendedName>
        <fullName evidence="1">Glycine--tRNA ligase beta subunit</fullName>
        <ecNumber evidence="1">6.1.1.14</ecNumber>
    </recommendedName>
    <alternativeName>
        <fullName evidence="1">Glycyl-tRNA synthetase beta subunit</fullName>
        <shortName evidence="1">GlyRS</shortName>
    </alternativeName>
</protein>